<name>RL27_ORITI</name>
<protein>
    <recommendedName>
        <fullName evidence="1">Large ribosomal subunit protein bL27</fullName>
    </recommendedName>
    <alternativeName>
        <fullName evidence="3">50S ribosomal protein L27</fullName>
    </alternativeName>
</protein>
<organism>
    <name type="scientific">Orientia tsutsugamushi (strain Ikeda)</name>
    <name type="common">Rickettsia tsutsugamushi</name>
    <dbReference type="NCBI Taxonomy" id="334380"/>
    <lineage>
        <taxon>Bacteria</taxon>
        <taxon>Pseudomonadati</taxon>
        <taxon>Pseudomonadota</taxon>
        <taxon>Alphaproteobacteria</taxon>
        <taxon>Rickettsiales</taxon>
        <taxon>Rickettsiaceae</taxon>
        <taxon>Rickettsieae</taxon>
        <taxon>Orientia</taxon>
    </lineage>
</organism>
<feature type="chain" id="PRO_1000128783" description="Large ribosomal subunit protein bL27">
    <location>
        <begin position="1"/>
        <end position="89"/>
    </location>
</feature>
<feature type="region of interest" description="Disordered" evidence="2">
    <location>
        <begin position="1"/>
        <end position="26"/>
    </location>
</feature>
<dbReference type="EMBL" id="AP008981">
    <property type="protein sequence ID" value="BAG41205.1"/>
    <property type="molecule type" value="Genomic_DNA"/>
</dbReference>
<dbReference type="RefSeq" id="WP_012462169.1">
    <property type="nucleotide sequence ID" value="NC_010793.1"/>
</dbReference>
<dbReference type="SMR" id="B3CV08"/>
<dbReference type="GeneID" id="89460061"/>
<dbReference type="KEGG" id="ott:OTT_1747"/>
<dbReference type="HOGENOM" id="CLU_095424_4_1_5"/>
<dbReference type="OrthoDB" id="9803474at2"/>
<dbReference type="Proteomes" id="UP000001033">
    <property type="component" value="Chromosome"/>
</dbReference>
<dbReference type="GO" id="GO:1990904">
    <property type="term" value="C:ribonucleoprotein complex"/>
    <property type="evidence" value="ECO:0007669"/>
    <property type="project" value="UniProtKB-KW"/>
</dbReference>
<dbReference type="GO" id="GO:0005840">
    <property type="term" value="C:ribosome"/>
    <property type="evidence" value="ECO:0007669"/>
    <property type="project" value="UniProtKB-KW"/>
</dbReference>
<dbReference type="GO" id="GO:0003735">
    <property type="term" value="F:structural constituent of ribosome"/>
    <property type="evidence" value="ECO:0007669"/>
    <property type="project" value="InterPro"/>
</dbReference>
<dbReference type="GO" id="GO:0006412">
    <property type="term" value="P:translation"/>
    <property type="evidence" value="ECO:0007669"/>
    <property type="project" value="UniProtKB-UniRule"/>
</dbReference>
<dbReference type="FunFam" id="2.40.50.100:FF:000020">
    <property type="entry name" value="50S ribosomal protein L27"/>
    <property type="match status" value="1"/>
</dbReference>
<dbReference type="Gene3D" id="2.40.50.100">
    <property type="match status" value="1"/>
</dbReference>
<dbReference type="HAMAP" id="MF_00539">
    <property type="entry name" value="Ribosomal_bL27"/>
    <property type="match status" value="1"/>
</dbReference>
<dbReference type="InterPro" id="IPR001684">
    <property type="entry name" value="Ribosomal_bL27"/>
</dbReference>
<dbReference type="NCBIfam" id="TIGR00062">
    <property type="entry name" value="L27"/>
    <property type="match status" value="1"/>
</dbReference>
<dbReference type="PANTHER" id="PTHR15893:SF0">
    <property type="entry name" value="LARGE RIBOSOMAL SUBUNIT PROTEIN BL27M"/>
    <property type="match status" value="1"/>
</dbReference>
<dbReference type="PANTHER" id="PTHR15893">
    <property type="entry name" value="RIBOSOMAL PROTEIN L27"/>
    <property type="match status" value="1"/>
</dbReference>
<dbReference type="Pfam" id="PF01016">
    <property type="entry name" value="Ribosomal_L27"/>
    <property type="match status" value="1"/>
</dbReference>
<dbReference type="PRINTS" id="PR00063">
    <property type="entry name" value="RIBOSOMALL27"/>
</dbReference>
<dbReference type="SUPFAM" id="SSF110324">
    <property type="entry name" value="Ribosomal L27 protein-like"/>
    <property type="match status" value="1"/>
</dbReference>
<sequence>MATKKAGGSSKNGRDSAGRRLGLKKSDGQLVNAGNIIVKQRGTKFYPGKNVGLGKDHTIFSLVSGKVKFFRKKKNRVFISVVVDDSTAA</sequence>
<gene>
    <name evidence="1" type="primary">rpmA</name>
    <name type="ordered locus">OTT_1747</name>
</gene>
<comment type="similarity">
    <text evidence="1">Belongs to the bacterial ribosomal protein bL27 family.</text>
</comment>
<proteinExistence type="inferred from homology"/>
<reference key="1">
    <citation type="journal article" date="2008" name="DNA Res.">
        <title>The whole-genome sequencing of the obligate intracellular bacterium Orientia tsutsugamushi revealed massive gene amplification during reductive genome evolution.</title>
        <authorList>
            <person name="Nakayama K."/>
            <person name="Yamashita A."/>
            <person name="Kurokawa K."/>
            <person name="Morimoto T."/>
            <person name="Ogawa M."/>
            <person name="Fukuhara M."/>
            <person name="Urakami H."/>
            <person name="Ohnishi M."/>
            <person name="Uchiyama I."/>
            <person name="Ogura Y."/>
            <person name="Ooka T."/>
            <person name="Oshima K."/>
            <person name="Tamura A."/>
            <person name="Hattori M."/>
            <person name="Hayashi T."/>
        </authorList>
    </citation>
    <scope>NUCLEOTIDE SEQUENCE [LARGE SCALE GENOMIC DNA]</scope>
    <source>
        <strain>Ikeda</strain>
    </source>
</reference>
<accession>B3CV08</accession>
<evidence type="ECO:0000255" key="1">
    <source>
        <dbReference type="HAMAP-Rule" id="MF_00539"/>
    </source>
</evidence>
<evidence type="ECO:0000256" key="2">
    <source>
        <dbReference type="SAM" id="MobiDB-lite"/>
    </source>
</evidence>
<evidence type="ECO:0000305" key="3"/>
<keyword id="KW-0687">Ribonucleoprotein</keyword>
<keyword id="KW-0689">Ribosomal protein</keyword>